<comment type="function">
    <text evidence="2 3">Involved in ascorbic acid (vitamin C) biosynthesis.</text>
</comment>
<comment type="catalytic activity">
    <reaction evidence="2">
        <text>L-galactonate + NADP(+) = aldehydo-D-galacturonate + NADPH + H(+)</text>
        <dbReference type="Rhea" id="RHEA:26345"/>
        <dbReference type="ChEBI" id="CHEBI:12952"/>
        <dbReference type="ChEBI" id="CHEBI:15378"/>
        <dbReference type="ChEBI" id="CHEBI:53071"/>
        <dbReference type="ChEBI" id="CHEBI:57783"/>
        <dbReference type="ChEBI" id="CHEBI:58349"/>
        <dbReference type="EC" id="1.1.1.365"/>
    </reaction>
</comment>
<comment type="pathway">
    <text>Cofactor biosynthesis; L-ascorbate biosynthesis.</text>
</comment>
<comment type="tissue specificity">
    <text evidence="2">Expressed specifically in the receptacle tissue of the fruit.</text>
</comment>
<comment type="developmental stage">
    <text evidence="2 3">Up-regulated during ripening, with a highest expression in fully mature red fruit.</text>
</comment>
<comment type="similarity">
    <text evidence="4">Belongs to the aldo/keto reductase family.</text>
</comment>
<keyword id="KW-0060">Ascorbate biosynthesis</keyword>
<keyword id="KW-0521">NADP</keyword>
<keyword id="KW-0560">Oxidoreductase</keyword>
<organism>
    <name type="scientific">Fragaria ananassa</name>
    <name type="common">Strawberry</name>
    <name type="synonym">Fragaria chiloensis x Fragaria virginiana</name>
    <dbReference type="NCBI Taxonomy" id="3747"/>
    <lineage>
        <taxon>Eukaryota</taxon>
        <taxon>Viridiplantae</taxon>
        <taxon>Streptophyta</taxon>
        <taxon>Embryophyta</taxon>
        <taxon>Tracheophyta</taxon>
        <taxon>Spermatophyta</taxon>
        <taxon>Magnoliopsida</taxon>
        <taxon>eudicotyledons</taxon>
        <taxon>Gunneridae</taxon>
        <taxon>Pentapetalae</taxon>
        <taxon>rosids</taxon>
        <taxon>fabids</taxon>
        <taxon>Rosales</taxon>
        <taxon>Rosaceae</taxon>
        <taxon>Rosoideae</taxon>
        <taxon>Potentilleae</taxon>
        <taxon>Fragariinae</taxon>
        <taxon>Fragaria</taxon>
    </lineage>
</organism>
<dbReference type="EC" id="1.1.1.365"/>
<dbReference type="EMBL" id="AF039182">
    <property type="protein sequence ID" value="AAB97005.1"/>
    <property type="molecule type" value="mRNA"/>
</dbReference>
<dbReference type="SMR" id="O49133"/>
<dbReference type="KEGG" id="ag:AAB97005"/>
<dbReference type="BioCyc" id="MetaCyc:MONOMER-21181"/>
<dbReference type="BRENDA" id="1.1.1.365">
    <property type="organism ID" value="2320"/>
</dbReference>
<dbReference type="UniPathway" id="UPA00132"/>
<dbReference type="GO" id="GO:0102098">
    <property type="term" value="F:D-galacturonate reductase activity"/>
    <property type="evidence" value="ECO:0007669"/>
    <property type="project" value="UniProtKB-EC"/>
</dbReference>
<dbReference type="GO" id="GO:0019853">
    <property type="term" value="P:L-ascorbic acid biosynthetic process"/>
    <property type="evidence" value="ECO:0007669"/>
    <property type="project" value="UniProtKB-UniPathway"/>
</dbReference>
<dbReference type="CDD" id="cd19124">
    <property type="entry name" value="AKR_AKR4A_4B"/>
    <property type="match status" value="1"/>
</dbReference>
<dbReference type="FunFam" id="3.20.20.100:FF:000014">
    <property type="entry name" value="NAD(P)-linked oxidoreductase superfamily protein"/>
    <property type="match status" value="1"/>
</dbReference>
<dbReference type="Gene3D" id="3.20.20.100">
    <property type="entry name" value="NADP-dependent oxidoreductase domain"/>
    <property type="match status" value="1"/>
</dbReference>
<dbReference type="InterPro" id="IPR020471">
    <property type="entry name" value="AKR"/>
</dbReference>
<dbReference type="InterPro" id="IPR044497">
    <property type="entry name" value="AKR4A/B"/>
</dbReference>
<dbReference type="InterPro" id="IPR018170">
    <property type="entry name" value="Aldo/ket_reductase_CS"/>
</dbReference>
<dbReference type="InterPro" id="IPR023210">
    <property type="entry name" value="NADP_OxRdtase_dom"/>
</dbReference>
<dbReference type="InterPro" id="IPR036812">
    <property type="entry name" value="NADP_OxRdtase_dom_sf"/>
</dbReference>
<dbReference type="PANTHER" id="PTHR11732">
    <property type="entry name" value="ALDO/KETO REDUCTASE"/>
    <property type="match status" value="1"/>
</dbReference>
<dbReference type="Pfam" id="PF00248">
    <property type="entry name" value="Aldo_ket_red"/>
    <property type="match status" value="1"/>
</dbReference>
<dbReference type="PIRSF" id="PIRSF000097">
    <property type="entry name" value="AKR"/>
    <property type="match status" value="1"/>
</dbReference>
<dbReference type="PRINTS" id="PR00069">
    <property type="entry name" value="ALDKETRDTASE"/>
</dbReference>
<dbReference type="SUPFAM" id="SSF51430">
    <property type="entry name" value="NAD(P)-linked oxidoreductase"/>
    <property type="match status" value="1"/>
</dbReference>
<dbReference type="PROSITE" id="PS00798">
    <property type="entry name" value="ALDOKETO_REDUCTASE_1"/>
    <property type="match status" value="1"/>
</dbReference>
<dbReference type="PROSITE" id="PS00062">
    <property type="entry name" value="ALDOKETO_REDUCTASE_2"/>
    <property type="match status" value="1"/>
</dbReference>
<name>GALUR_FRAAN</name>
<sequence length="319" mass="35669">MAKVPSVTLSSCGDDIQTMPVIGMGTSSYPRADPETAKAAILEAIRAGYRHFDTAAAYGSEKDLGEAIAEALRLQLIKSRDELFITTKLWASFAEKDLVLPSIKASLSNLQVEYIDMYIIHWPFKLGKEVRTMPVERDLVQPLDIKSVWEAMEECKKLGLARGIGVSNFTSSMLEELLSFAEIPPAVNQLEMNPAWQLKKLRDFCKAKGIHVTAYSPLGAARTKWGDDRVLGSDIIEEIAQAKGKSTAQISLRWVYEQGVSIVTKSYNKERMRQNLDIFDFCLTEEELEKMSHLPQRKGVTFASILGPHDIVLEVDEEL</sequence>
<proteinExistence type="evidence at protein level"/>
<accession>O49133</accession>
<protein>
    <recommendedName>
        <fullName>D-galacturonate reductase</fullName>
        <shortName>FaGalUR</shortName>
        <ecNumber>1.1.1.365</ecNumber>
    </recommendedName>
    <alternativeName>
        <fullName>Aldo-keto reductase 2</fullName>
    </alternativeName>
</protein>
<reference key="1">
    <citation type="journal article" date="2003" name="Nat. Biotechnol.">
        <title>Engineering increased vitamin C levels in plants by overexpression of a D-galacturonic acid reductase.</title>
        <authorList>
            <person name="Agius F."/>
            <person name="Gonzalez-Lamothe R."/>
            <person name="Caballero J.L."/>
            <person name="Munoz-Blanco J."/>
            <person name="Botella M.A."/>
            <person name="Valpuesta V."/>
        </authorList>
    </citation>
    <scope>NUCLEOTIDE SEQUENCE [MRNA]</scope>
    <scope>FUNCTION</scope>
    <scope>CATALYTIC ACTIVITY</scope>
    <scope>TISSUE SPECIFICITY</scope>
    <scope>DEVELOPMENTAL STAGE</scope>
    <source>
        <strain>cv. Chandler</strain>
    </source>
</reference>
<reference key="2">
    <citation type="journal article" date="2011" name="J. Exp. Bot.">
        <title>Regulation of L-ascorbic acid content in strawberry fruits.</title>
        <authorList>
            <person name="Cruz-Rus E."/>
            <person name="Amaya I."/>
            <person name="Sanchez-Sevilla J.F."/>
            <person name="Botella M.A."/>
            <person name="Valpuesta V."/>
        </authorList>
    </citation>
    <scope>FUNCTION</scope>
    <scope>DEVELOPMENTAL STAGE</scope>
</reference>
<feature type="chain" id="PRO_0000425862" description="D-galacturonate reductase">
    <location>
        <begin position="1"/>
        <end position="319"/>
    </location>
</feature>
<feature type="active site" description="Proton donor" evidence="1">
    <location>
        <position position="58"/>
    </location>
</feature>
<feature type="binding site" evidence="1">
    <location>
        <position position="121"/>
    </location>
    <ligand>
        <name>substrate</name>
    </ligand>
</feature>
<feature type="binding site" evidence="1">
    <location>
        <begin position="216"/>
        <end position="275"/>
    </location>
    <ligand>
        <name>NADP(+)</name>
        <dbReference type="ChEBI" id="CHEBI:58349"/>
    </ligand>
</feature>
<gene>
    <name type="primary">GALUR</name>
    <name type="synonym">AKR2</name>
</gene>
<evidence type="ECO:0000250" key="1"/>
<evidence type="ECO:0000269" key="2">
    <source>
    </source>
</evidence>
<evidence type="ECO:0000269" key="3">
    <source>
    </source>
</evidence>
<evidence type="ECO:0000305" key="4"/>